<protein>
    <recommendedName>
        <fullName>UPF0758 protein lwe1562</fullName>
    </recommendedName>
</protein>
<keyword id="KW-0378">Hydrolase</keyword>
<keyword id="KW-0479">Metal-binding</keyword>
<keyword id="KW-0482">Metalloprotease</keyword>
<keyword id="KW-0645">Protease</keyword>
<keyword id="KW-0862">Zinc</keyword>
<gene>
    <name type="ordered locus">lwe1562</name>
</gene>
<sequence length="224" mass="25068">MLTSEISESEKPREKLQNYGIEALSSSELVALIIETGTKNESVLTIANRIIMKFKHVAEMQYASIEEFQLVNGIGVAKASKIMAAIELGRRISIVTNQEEIVIRCPDDAVKLVMPELAFLFQEHFHCIFLNTKNQVIYRQTIFVGGLNASIVHPREVFRLALRKSSAAIMCFHNHPSGDPTPSSEDLLVTKRLVEAGNIIGITLLDHIIIGKNKYISLKEKGYF</sequence>
<name>Y1562_LISW6</name>
<evidence type="ECO:0000255" key="1">
    <source>
        <dbReference type="PROSITE-ProRule" id="PRU01182"/>
    </source>
</evidence>
<evidence type="ECO:0000305" key="2"/>
<organism>
    <name type="scientific">Listeria welshimeri serovar 6b (strain ATCC 35897 / DSM 20650 / CCUG 15529 / CIP 8149 / NCTC 11857 / SLCC 5334 / V8)</name>
    <dbReference type="NCBI Taxonomy" id="386043"/>
    <lineage>
        <taxon>Bacteria</taxon>
        <taxon>Bacillati</taxon>
        <taxon>Bacillota</taxon>
        <taxon>Bacilli</taxon>
        <taxon>Bacillales</taxon>
        <taxon>Listeriaceae</taxon>
        <taxon>Listeria</taxon>
    </lineage>
</organism>
<accession>A0AIZ8</accession>
<comment type="similarity">
    <text evidence="2">Belongs to the UPF0758 family.</text>
</comment>
<reference key="1">
    <citation type="journal article" date="2006" name="J. Bacteriol.">
        <title>Whole-genome sequence of Listeria welshimeri reveals common steps in genome reduction with Listeria innocua as compared to Listeria monocytogenes.</title>
        <authorList>
            <person name="Hain T."/>
            <person name="Steinweg C."/>
            <person name="Kuenne C.T."/>
            <person name="Billion A."/>
            <person name="Ghai R."/>
            <person name="Chatterjee S.S."/>
            <person name="Domann E."/>
            <person name="Kaerst U."/>
            <person name="Goesmann A."/>
            <person name="Bekel T."/>
            <person name="Bartels D."/>
            <person name="Kaiser O."/>
            <person name="Meyer F."/>
            <person name="Puehler A."/>
            <person name="Weisshaar B."/>
            <person name="Wehland J."/>
            <person name="Liang C."/>
            <person name="Dandekar T."/>
            <person name="Lampidis R."/>
            <person name="Kreft J."/>
            <person name="Goebel W."/>
            <person name="Chakraborty T."/>
        </authorList>
    </citation>
    <scope>NUCLEOTIDE SEQUENCE [LARGE SCALE GENOMIC DNA]</scope>
    <source>
        <strain>ATCC 35897 / DSM 20650 / CCUG 15529 / CIP 8149 / NCTC 11857 / SLCC 5334 / V8</strain>
    </source>
</reference>
<dbReference type="EMBL" id="AM263198">
    <property type="protein sequence ID" value="CAK20980.1"/>
    <property type="molecule type" value="Genomic_DNA"/>
</dbReference>
<dbReference type="RefSeq" id="WP_011702348.1">
    <property type="nucleotide sequence ID" value="NC_008555.1"/>
</dbReference>
<dbReference type="SMR" id="A0AIZ8"/>
<dbReference type="STRING" id="386043.lwe1562"/>
<dbReference type="GeneID" id="61189439"/>
<dbReference type="KEGG" id="lwe:lwe1562"/>
<dbReference type="eggNOG" id="COG2003">
    <property type="taxonomic scope" value="Bacteria"/>
</dbReference>
<dbReference type="HOGENOM" id="CLU_073529_0_2_9"/>
<dbReference type="OrthoDB" id="9804482at2"/>
<dbReference type="Proteomes" id="UP000000779">
    <property type="component" value="Chromosome"/>
</dbReference>
<dbReference type="GO" id="GO:0046872">
    <property type="term" value="F:metal ion binding"/>
    <property type="evidence" value="ECO:0007669"/>
    <property type="project" value="UniProtKB-KW"/>
</dbReference>
<dbReference type="GO" id="GO:0008237">
    <property type="term" value="F:metallopeptidase activity"/>
    <property type="evidence" value="ECO:0007669"/>
    <property type="project" value="UniProtKB-KW"/>
</dbReference>
<dbReference type="GO" id="GO:0006508">
    <property type="term" value="P:proteolysis"/>
    <property type="evidence" value="ECO:0007669"/>
    <property type="project" value="UniProtKB-KW"/>
</dbReference>
<dbReference type="CDD" id="cd08071">
    <property type="entry name" value="MPN_DUF2466"/>
    <property type="match status" value="1"/>
</dbReference>
<dbReference type="Gene3D" id="1.10.150.20">
    <property type="entry name" value="5' to 3' exonuclease, C-terminal subdomain"/>
    <property type="match status" value="1"/>
</dbReference>
<dbReference type="Gene3D" id="3.40.140.10">
    <property type="entry name" value="Cytidine Deaminase, domain 2"/>
    <property type="match status" value="1"/>
</dbReference>
<dbReference type="InterPro" id="IPR037518">
    <property type="entry name" value="MPN"/>
</dbReference>
<dbReference type="InterPro" id="IPR025657">
    <property type="entry name" value="RadC_JAB"/>
</dbReference>
<dbReference type="InterPro" id="IPR010994">
    <property type="entry name" value="RuvA_2-like"/>
</dbReference>
<dbReference type="InterPro" id="IPR001405">
    <property type="entry name" value="UPF0758"/>
</dbReference>
<dbReference type="InterPro" id="IPR020891">
    <property type="entry name" value="UPF0758_CS"/>
</dbReference>
<dbReference type="InterPro" id="IPR046778">
    <property type="entry name" value="UPF0758_N"/>
</dbReference>
<dbReference type="NCBIfam" id="NF000642">
    <property type="entry name" value="PRK00024.1"/>
    <property type="match status" value="1"/>
</dbReference>
<dbReference type="NCBIfam" id="TIGR00608">
    <property type="entry name" value="radc"/>
    <property type="match status" value="1"/>
</dbReference>
<dbReference type="PANTHER" id="PTHR30471">
    <property type="entry name" value="DNA REPAIR PROTEIN RADC"/>
    <property type="match status" value="1"/>
</dbReference>
<dbReference type="PANTHER" id="PTHR30471:SF3">
    <property type="entry name" value="UPF0758 PROTEIN YEES-RELATED"/>
    <property type="match status" value="1"/>
</dbReference>
<dbReference type="Pfam" id="PF04002">
    <property type="entry name" value="RadC"/>
    <property type="match status" value="1"/>
</dbReference>
<dbReference type="Pfam" id="PF20582">
    <property type="entry name" value="UPF0758_N"/>
    <property type="match status" value="1"/>
</dbReference>
<dbReference type="SUPFAM" id="SSF102712">
    <property type="entry name" value="JAB1/MPN domain"/>
    <property type="match status" value="1"/>
</dbReference>
<dbReference type="SUPFAM" id="SSF47781">
    <property type="entry name" value="RuvA domain 2-like"/>
    <property type="match status" value="1"/>
</dbReference>
<dbReference type="PROSITE" id="PS50249">
    <property type="entry name" value="MPN"/>
    <property type="match status" value="1"/>
</dbReference>
<dbReference type="PROSITE" id="PS01302">
    <property type="entry name" value="UPF0758"/>
    <property type="match status" value="1"/>
</dbReference>
<proteinExistence type="inferred from homology"/>
<feature type="chain" id="PRO_1000001663" description="UPF0758 protein lwe1562">
    <location>
        <begin position="1"/>
        <end position="224"/>
    </location>
</feature>
<feature type="domain" description="MPN" evidence="1">
    <location>
        <begin position="102"/>
        <end position="224"/>
    </location>
</feature>
<feature type="short sequence motif" description="JAMM motif" evidence="1">
    <location>
        <begin position="173"/>
        <end position="186"/>
    </location>
</feature>
<feature type="binding site" evidence="1">
    <location>
        <position position="173"/>
    </location>
    <ligand>
        <name>Zn(2+)</name>
        <dbReference type="ChEBI" id="CHEBI:29105"/>
        <note>catalytic</note>
    </ligand>
</feature>
<feature type="binding site" evidence="1">
    <location>
        <position position="175"/>
    </location>
    <ligand>
        <name>Zn(2+)</name>
        <dbReference type="ChEBI" id="CHEBI:29105"/>
        <note>catalytic</note>
    </ligand>
</feature>
<feature type="binding site" evidence="1">
    <location>
        <position position="186"/>
    </location>
    <ligand>
        <name>Zn(2+)</name>
        <dbReference type="ChEBI" id="CHEBI:29105"/>
        <note>catalytic</note>
    </ligand>
</feature>